<protein>
    <recommendedName>
        <fullName>E3 ubiquitin-protein ligase Siah2</fullName>
        <ecNumber>2.3.2.27</ecNumber>
    </recommendedName>
    <alternativeName>
        <fullName evidence="9">RING-type E3 ubiquitin transferase SIAH2</fullName>
    </alternativeName>
    <alternativeName>
        <fullName>Seven in absentia homolog 2-like</fullName>
        <shortName>Siah-2</shortName>
    </alternativeName>
</protein>
<gene>
    <name type="primary">siah2l</name>
    <name type="synonym">siah2</name>
    <name type="synonym">siaz</name>
    <name type="ORF">zgc:66284</name>
</gene>
<organism>
    <name type="scientific">Danio rerio</name>
    <name type="common">Zebrafish</name>
    <name type="synonym">Brachydanio rerio</name>
    <dbReference type="NCBI Taxonomy" id="7955"/>
    <lineage>
        <taxon>Eukaryota</taxon>
        <taxon>Metazoa</taxon>
        <taxon>Chordata</taxon>
        <taxon>Craniata</taxon>
        <taxon>Vertebrata</taxon>
        <taxon>Euteleostomi</taxon>
        <taxon>Actinopterygii</taxon>
        <taxon>Neopterygii</taxon>
        <taxon>Teleostei</taxon>
        <taxon>Ostariophysi</taxon>
        <taxon>Cypriniformes</taxon>
        <taxon>Danionidae</taxon>
        <taxon>Danioninae</taxon>
        <taxon>Danio</taxon>
    </lineage>
</organism>
<reference key="1">
    <citation type="journal article" date="2003" name="Gene Expr. Patterns">
        <title>Expression pattern of Siaz gene during the zebrafish embryonic development.</title>
        <authorList>
            <person name="Ro H."/>
            <person name="Kim K.E."/>
            <person name="Huh T.L."/>
            <person name="Lee S.-K."/>
            <person name="Rhee M."/>
        </authorList>
    </citation>
    <scope>NUCLEOTIDE SEQUENCE [MRNA] (ISOFORM 1)</scope>
    <scope>TISSUE SPECIFICITY</scope>
    <scope>DEVELOPMENTAL STAGE</scope>
    <source>
        <tissue>Embryo</tissue>
    </source>
</reference>
<reference key="2">
    <citation type="submission" date="2003-07" db="EMBL/GenBank/DDBJ databases">
        <authorList>
            <consortium name="NIH - Zebrafish Gene Collection (ZGC) project"/>
        </authorList>
    </citation>
    <scope>NUCLEOTIDE SEQUENCE [LARGE SCALE MRNA] (ISOFORM 2)</scope>
</reference>
<reference key="3">
    <citation type="journal article" date="2004" name="Mol. Cells">
        <title>The RING domain of Siaz, the zebrafish homologue of Drosophila seven in absentia, is essential for cellular growth arrest.</title>
        <authorList>
            <person name="Ro H."/>
            <person name="Jang Y."/>
            <person name="Rhee M."/>
        </authorList>
    </citation>
    <scope>FUNCTION</scope>
    <scope>DOMAIN</scope>
</reference>
<dbReference type="EC" id="2.3.2.27"/>
<dbReference type="EMBL" id="AF411696">
    <property type="protein sequence ID" value="AAN03677.1"/>
    <property type="molecule type" value="mRNA"/>
</dbReference>
<dbReference type="EMBL" id="BC054674">
    <property type="protein sequence ID" value="AAH54674.1"/>
    <property type="molecule type" value="mRNA"/>
</dbReference>
<dbReference type="SMR" id="Q7SYL3"/>
<dbReference type="FunCoup" id="Q7SYL3">
    <property type="interactions" value="724"/>
</dbReference>
<dbReference type="STRING" id="7955.ENSDARP00000065168"/>
<dbReference type="PaxDb" id="7955-ENSDARP00000065168"/>
<dbReference type="AGR" id="ZFIN:ZDB-GENE-030922-1"/>
<dbReference type="ZFIN" id="ZDB-GENE-030922-1">
    <property type="gene designation" value="siah2l"/>
</dbReference>
<dbReference type="eggNOG" id="KOG3002">
    <property type="taxonomic scope" value="Eukaryota"/>
</dbReference>
<dbReference type="InParanoid" id="Q7SYL3"/>
<dbReference type="PhylomeDB" id="Q7SYL3"/>
<dbReference type="Reactome" id="R-DRE-373752">
    <property type="pathway name" value="Netrin-1 signaling"/>
</dbReference>
<dbReference type="Reactome" id="R-DRE-5689880">
    <property type="pathway name" value="Ub-specific processing proteases"/>
</dbReference>
<dbReference type="Reactome" id="R-DRE-983168">
    <property type="pathway name" value="Antigen processing: Ubiquitination &amp; Proteasome degradation"/>
</dbReference>
<dbReference type="UniPathway" id="UPA00143"/>
<dbReference type="PRO" id="PR:Q7SYL3"/>
<dbReference type="Proteomes" id="UP000000437">
    <property type="component" value="Unplaced"/>
</dbReference>
<dbReference type="GO" id="GO:0005737">
    <property type="term" value="C:cytoplasm"/>
    <property type="evidence" value="ECO:0000318"/>
    <property type="project" value="GO_Central"/>
</dbReference>
<dbReference type="GO" id="GO:0031624">
    <property type="term" value="F:ubiquitin conjugating enzyme binding"/>
    <property type="evidence" value="ECO:0000318"/>
    <property type="project" value="GO_Central"/>
</dbReference>
<dbReference type="GO" id="GO:0061630">
    <property type="term" value="F:ubiquitin protein ligase activity"/>
    <property type="evidence" value="ECO:0000250"/>
    <property type="project" value="UniProtKB"/>
</dbReference>
<dbReference type="GO" id="GO:0008270">
    <property type="term" value="F:zinc ion binding"/>
    <property type="evidence" value="ECO:0007669"/>
    <property type="project" value="UniProtKB-KW"/>
</dbReference>
<dbReference type="GO" id="GO:0043161">
    <property type="term" value="P:proteasome-mediated ubiquitin-dependent protein catabolic process"/>
    <property type="evidence" value="ECO:0000318"/>
    <property type="project" value="GO_Central"/>
</dbReference>
<dbReference type="GO" id="GO:0016567">
    <property type="term" value="P:protein ubiquitination"/>
    <property type="evidence" value="ECO:0007669"/>
    <property type="project" value="UniProtKB-UniPathway"/>
</dbReference>
<dbReference type="GO" id="GO:0042752">
    <property type="term" value="P:regulation of circadian rhythm"/>
    <property type="evidence" value="ECO:0000250"/>
    <property type="project" value="UniProtKB"/>
</dbReference>
<dbReference type="GO" id="GO:0048511">
    <property type="term" value="P:rhythmic process"/>
    <property type="evidence" value="ECO:0007669"/>
    <property type="project" value="UniProtKB-KW"/>
</dbReference>
<dbReference type="GO" id="GO:0006511">
    <property type="term" value="P:ubiquitin-dependent protein catabolic process"/>
    <property type="evidence" value="ECO:0000250"/>
    <property type="project" value="UniProtKB"/>
</dbReference>
<dbReference type="CDD" id="cd16752">
    <property type="entry name" value="RING-HC_SIAH2"/>
    <property type="match status" value="1"/>
</dbReference>
<dbReference type="CDD" id="cd03829">
    <property type="entry name" value="Sina"/>
    <property type="match status" value="1"/>
</dbReference>
<dbReference type="FunFam" id="2.60.210.10:FF:000002">
    <property type="entry name" value="E3 ubiquitin-protein ligase"/>
    <property type="match status" value="1"/>
</dbReference>
<dbReference type="FunFam" id="3.30.160.60:FF:000665">
    <property type="entry name" value="E3 ubiquitin-protein ligase"/>
    <property type="match status" value="1"/>
</dbReference>
<dbReference type="FunFam" id="3.30.40.10:FF:000692">
    <property type="entry name" value="E3 ubiquitin-protein ligase"/>
    <property type="match status" value="1"/>
</dbReference>
<dbReference type="Gene3D" id="2.60.210.10">
    <property type="entry name" value="Apoptosis, Tumor Necrosis Factor Receptor Associated Protein 2, Chain A"/>
    <property type="match status" value="1"/>
</dbReference>
<dbReference type="Gene3D" id="3.30.160.60">
    <property type="entry name" value="Classic Zinc Finger"/>
    <property type="match status" value="1"/>
</dbReference>
<dbReference type="Gene3D" id="3.30.40.10">
    <property type="entry name" value="Zinc/RING finger domain, C3HC4 (zinc finger)"/>
    <property type="match status" value="1"/>
</dbReference>
<dbReference type="InterPro" id="IPR018121">
    <property type="entry name" value="7-in-absentia-prot_TRAF-dom"/>
</dbReference>
<dbReference type="InterPro" id="IPR004162">
    <property type="entry name" value="SINA-like_animal"/>
</dbReference>
<dbReference type="InterPro" id="IPR049548">
    <property type="entry name" value="Sina-like_RING"/>
</dbReference>
<dbReference type="InterPro" id="IPR008974">
    <property type="entry name" value="TRAF-like"/>
</dbReference>
<dbReference type="InterPro" id="IPR001841">
    <property type="entry name" value="Znf_RING"/>
</dbReference>
<dbReference type="InterPro" id="IPR013083">
    <property type="entry name" value="Znf_RING/FYVE/PHD"/>
</dbReference>
<dbReference type="InterPro" id="IPR013010">
    <property type="entry name" value="Znf_SIAH"/>
</dbReference>
<dbReference type="PANTHER" id="PTHR45877">
    <property type="entry name" value="E3 UBIQUITIN-PROTEIN LIGASE SIAH2"/>
    <property type="match status" value="1"/>
</dbReference>
<dbReference type="PANTHER" id="PTHR45877:SF4">
    <property type="entry name" value="E3 UBIQUITIN-PROTEIN LIGASE SIAH2"/>
    <property type="match status" value="1"/>
</dbReference>
<dbReference type="Pfam" id="PF21362">
    <property type="entry name" value="Sina_RING"/>
    <property type="match status" value="1"/>
</dbReference>
<dbReference type="Pfam" id="PF03145">
    <property type="entry name" value="Sina_TRAF"/>
    <property type="match status" value="1"/>
</dbReference>
<dbReference type="Pfam" id="PF21361">
    <property type="entry name" value="Sina_ZnF"/>
    <property type="match status" value="1"/>
</dbReference>
<dbReference type="SUPFAM" id="SSF57850">
    <property type="entry name" value="RING/U-box"/>
    <property type="match status" value="1"/>
</dbReference>
<dbReference type="SUPFAM" id="SSF49599">
    <property type="entry name" value="TRAF domain-like"/>
    <property type="match status" value="1"/>
</dbReference>
<dbReference type="PROSITE" id="PS50089">
    <property type="entry name" value="ZF_RING_2"/>
    <property type="match status" value="1"/>
</dbReference>
<dbReference type="PROSITE" id="PS51081">
    <property type="entry name" value="ZF_SIAH"/>
    <property type="match status" value="1"/>
</dbReference>
<accession>Q7SYL3</accession>
<accession>Q8JHZ9</accession>
<name>SIAH2_DANRE</name>
<comment type="function">
    <text evidence="2 7">E3 ubiquitin-protein ligase that mediates ubiquitination and subsequent proteasomal degradation of target proteins. E3 ubiquitin ligases accept ubiquitin from an E2 ubiquitin-conjugating enzyme in the form of a thioester and then directly transfers the ubiquitin to targeted substrates. It probably triggers the ubiquitin-mediated degradation of different substrates. Induces cellular growth arrest by inhibiting the G2/M transition (PubMed:15055544). May play a role in the regulation of the cellular clock function (By similarity).</text>
</comment>
<comment type="catalytic activity">
    <reaction>
        <text>S-ubiquitinyl-[E2 ubiquitin-conjugating enzyme]-L-cysteine + [acceptor protein]-L-lysine = [E2 ubiquitin-conjugating enzyme]-L-cysteine + N(6)-ubiquitinyl-[acceptor protein]-L-lysine.</text>
        <dbReference type="EC" id="2.3.2.27"/>
    </reaction>
</comment>
<comment type="pathway">
    <text>Protein modification; protein ubiquitination.</text>
</comment>
<comment type="subunit">
    <text evidence="2">Homodimer.</text>
</comment>
<comment type="alternative products">
    <event type="alternative splicing"/>
    <isoform>
        <id>Q7SYL3-1</id>
        <name>1</name>
        <sequence type="displayed"/>
    </isoform>
    <isoform>
        <id>Q7SYL3-2</id>
        <name>2</name>
        <sequence type="described" ref="VSP_010167 VSP_010168"/>
    </isoform>
</comment>
<comment type="tissue specificity">
    <text evidence="6">In embryos it is expressed in all blastomeres starting at the mid-blastulla. After 20 somite stage, it is expressed mainly in the posterior part. Expressed in brain, including the eye, the cranial cavity, otic vesicle, optic chiasm and in the gut.</text>
</comment>
<comment type="developmental stage">
    <text evidence="6">Expressed both maternally and zygotically.</text>
</comment>
<comment type="domain">
    <text evidence="1">The RING-type zinc finger domain is essential for ubiquitin ligase activity.</text>
</comment>
<comment type="domain">
    <text evidence="7">The SBD domain (substrate-binding domain) mediates the homodimerization and the interaction with substrate proteins. It is related to the TRAF family.</text>
</comment>
<comment type="similarity">
    <text evidence="9">Belongs to the SINA (Seven in absentia) family.</text>
</comment>
<feature type="chain" id="PRO_0000056171" description="E3 ubiquitin-protein ligase Siah2">
    <location>
        <begin position="1"/>
        <end position="331"/>
    </location>
</feature>
<feature type="zinc finger region" description="RING-type" evidence="3">
    <location>
        <begin position="89"/>
        <end position="124"/>
    </location>
</feature>
<feature type="zinc finger region" description="SIAH-type" evidence="4">
    <location>
        <begin position="142"/>
        <end position="202"/>
    </location>
</feature>
<feature type="region of interest" description="Disordered" evidence="5">
    <location>
        <begin position="1"/>
        <end position="26"/>
    </location>
</feature>
<feature type="region of interest" description="SBD">
    <location>
        <begin position="139"/>
        <end position="331"/>
    </location>
</feature>
<feature type="compositionally biased region" description="Gly residues" evidence="5">
    <location>
        <begin position="9"/>
        <end position="26"/>
    </location>
</feature>
<feature type="binding site" evidence="1">
    <location>
        <position position="147"/>
    </location>
    <ligand>
        <name>Zn(2+)</name>
        <dbReference type="ChEBI" id="CHEBI:29105"/>
        <label>1</label>
    </ligand>
</feature>
<feature type="binding site" evidence="1">
    <location>
        <position position="154"/>
    </location>
    <ligand>
        <name>Zn(2+)</name>
        <dbReference type="ChEBI" id="CHEBI:29105"/>
        <label>1</label>
    </ligand>
</feature>
<feature type="binding site" evidence="1">
    <location>
        <position position="166"/>
    </location>
    <ligand>
        <name>Zn(2+)</name>
        <dbReference type="ChEBI" id="CHEBI:29105"/>
        <label>1</label>
    </ligand>
</feature>
<feature type="binding site" evidence="1">
    <location>
        <position position="170"/>
    </location>
    <ligand>
        <name>Zn(2+)</name>
        <dbReference type="ChEBI" id="CHEBI:29105"/>
        <label>1</label>
    </ligand>
</feature>
<feature type="binding site" evidence="1">
    <location>
        <position position="177"/>
    </location>
    <ligand>
        <name>Zn(2+)</name>
        <dbReference type="ChEBI" id="CHEBI:29105"/>
        <label>2</label>
    </ligand>
</feature>
<feature type="binding site" evidence="1">
    <location>
        <position position="184"/>
    </location>
    <ligand>
        <name>Zn(2+)</name>
        <dbReference type="ChEBI" id="CHEBI:29105"/>
        <label>2</label>
    </ligand>
</feature>
<feature type="binding site" evidence="1">
    <location>
        <position position="196"/>
    </location>
    <ligand>
        <name>Zn(2+)</name>
        <dbReference type="ChEBI" id="CHEBI:29105"/>
        <label>2</label>
    </ligand>
</feature>
<feature type="binding site" evidence="1">
    <location>
        <position position="201"/>
    </location>
    <ligand>
        <name>Zn(2+)</name>
        <dbReference type="ChEBI" id="CHEBI:29105"/>
        <label>2</label>
    </ligand>
</feature>
<feature type="splice variant" id="VSP_010167" description="In isoform 2." evidence="8">
    <original>LMHAHKSITTLQ</original>
    <variation>HVQSMTVLQRPS</variation>
    <location>
        <begin position="197"/>
        <end position="208"/>
    </location>
</feature>
<feature type="splice variant" id="VSP_010168" description="In isoform 2." evidence="8">
    <location>
        <begin position="209"/>
        <end position="331"/>
    </location>
</feature>
<feature type="sequence conflict" description="In Ref. 2; AAH54674." evidence="9" ref="2">
    <location>
        <position position="34"/>
    </location>
</feature>
<proteinExistence type="evidence at transcript level"/>
<sequence length="331" mass="34494">MSRPSSAGGAAGGLGAGKAGGSKHGGSGGTTASAAAAAAAAAAAAAAAAAAAGVSGSVAGSGTVPAAAVALPVAALPGQSPELTALFECPVCFDYVLPPILQCQAGHLVCNQCRQKLSCCPTCRGPLTPSIRNLAMEKVASTLPFPCKYSSAGCLLSLHHSEKPEHEEVCEFRPYTCPCPGASCKWQGSLEEVMPHLMHAHKSITTLQGEDIVFLATDINLPGAVDWVMMQSCFGHHFMLVLEKQEKYEGHQQFFAIVLLIGTRKQAENFAYRLELNGNRRRLTWEATPRSIHDGVAAAIMNSDCLVFDTSIAHLFADNGNLGINVTISMC</sequence>
<evidence type="ECO:0000250" key="1"/>
<evidence type="ECO:0000250" key="2">
    <source>
        <dbReference type="UniProtKB" id="O43255"/>
    </source>
</evidence>
<evidence type="ECO:0000255" key="3">
    <source>
        <dbReference type="PROSITE-ProRule" id="PRU00175"/>
    </source>
</evidence>
<evidence type="ECO:0000255" key="4">
    <source>
        <dbReference type="PROSITE-ProRule" id="PRU00455"/>
    </source>
</evidence>
<evidence type="ECO:0000256" key="5">
    <source>
        <dbReference type="SAM" id="MobiDB-lite"/>
    </source>
</evidence>
<evidence type="ECO:0000269" key="6">
    <source>
    </source>
</evidence>
<evidence type="ECO:0000269" key="7">
    <source>
    </source>
</evidence>
<evidence type="ECO:0000303" key="8">
    <source ref="2"/>
</evidence>
<evidence type="ECO:0000305" key="9"/>
<keyword id="KW-0025">Alternative splicing</keyword>
<keyword id="KW-0090">Biological rhythms</keyword>
<keyword id="KW-0131">Cell cycle</keyword>
<keyword id="KW-0479">Metal-binding</keyword>
<keyword id="KW-1185">Reference proteome</keyword>
<keyword id="KW-0808">Transferase</keyword>
<keyword id="KW-0833">Ubl conjugation pathway</keyword>
<keyword id="KW-0862">Zinc</keyword>
<keyword id="KW-0863">Zinc-finger</keyword>